<dbReference type="EC" id="3.1.11.6" evidence="1"/>
<dbReference type="EMBL" id="AE003849">
    <property type="protein sequence ID" value="AAF83565.1"/>
    <property type="molecule type" value="Genomic_DNA"/>
</dbReference>
<dbReference type="PIR" id="H82768">
    <property type="entry name" value="H82768"/>
</dbReference>
<dbReference type="RefSeq" id="WP_010893278.1">
    <property type="nucleotide sequence ID" value="NC_002488.3"/>
</dbReference>
<dbReference type="SMR" id="Q9PFC3"/>
<dbReference type="STRING" id="160492.XF_0755"/>
<dbReference type="KEGG" id="xfa:XF_0755"/>
<dbReference type="eggNOG" id="COG1570">
    <property type="taxonomic scope" value="Bacteria"/>
</dbReference>
<dbReference type="HOGENOM" id="CLU_023625_3_1_6"/>
<dbReference type="Proteomes" id="UP000000812">
    <property type="component" value="Chromosome"/>
</dbReference>
<dbReference type="GO" id="GO:0005737">
    <property type="term" value="C:cytoplasm"/>
    <property type="evidence" value="ECO:0007669"/>
    <property type="project" value="UniProtKB-SubCell"/>
</dbReference>
<dbReference type="GO" id="GO:0009318">
    <property type="term" value="C:exodeoxyribonuclease VII complex"/>
    <property type="evidence" value="ECO:0007669"/>
    <property type="project" value="InterPro"/>
</dbReference>
<dbReference type="GO" id="GO:0008855">
    <property type="term" value="F:exodeoxyribonuclease VII activity"/>
    <property type="evidence" value="ECO:0007669"/>
    <property type="project" value="UniProtKB-UniRule"/>
</dbReference>
<dbReference type="GO" id="GO:0003676">
    <property type="term" value="F:nucleic acid binding"/>
    <property type="evidence" value="ECO:0007669"/>
    <property type="project" value="InterPro"/>
</dbReference>
<dbReference type="GO" id="GO:0006308">
    <property type="term" value="P:DNA catabolic process"/>
    <property type="evidence" value="ECO:0007669"/>
    <property type="project" value="UniProtKB-UniRule"/>
</dbReference>
<dbReference type="CDD" id="cd04489">
    <property type="entry name" value="ExoVII_LU_OBF"/>
    <property type="match status" value="1"/>
</dbReference>
<dbReference type="HAMAP" id="MF_00378">
    <property type="entry name" value="Exonuc_7_L"/>
    <property type="match status" value="1"/>
</dbReference>
<dbReference type="InterPro" id="IPR003753">
    <property type="entry name" value="Exonuc_VII_L"/>
</dbReference>
<dbReference type="InterPro" id="IPR020579">
    <property type="entry name" value="Exonuc_VII_lsu_C"/>
</dbReference>
<dbReference type="InterPro" id="IPR025824">
    <property type="entry name" value="OB-fold_nuc-bd_dom"/>
</dbReference>
<dbReference type="NCBIfam" id="TIGR00237">
    <property type="entry name" value="xseA"/>
    <property type="match status" value="1"/>
</dbReference>
<dbReference type="PANTHER" id="PTHR30008">
    <property type="entry name" value="EXODEOXYRIBONUCLEASE 7 LARGE SUBUNIT"/>
    <property type="match status" value="1"/>
</dbReference>
<dbReference type="PANTHER" id="PTHR30008:SF0">
    <property type="entry name" value="EXODEOXYRIBONUCLEASE 7 LARGE SUBUNIT"/>
    <property type="match status" value="1"/>
</dbReference>
<dbReference type="Pfam" id="PF02601">
    <property type="entry name" value="Exonuc_VII_L"/>
    <property type="match status" value="1"/>
</dbReference>
<dbReference type="Pfam" id="PF13742">
    <property type="entry name" value="tRNA_anti_2"/>
    <property type="match status" value="1"/>
</dbReference>
<organism>
    <name type="scientific">Xylella fastidiosa (strain 9a5c)</name>
    <dbReference type="NCBI Taxonomy" id="160492"/>
    <lineage>
        <taxon>Bacteria</taxon>
        <taxon>Pseudomonadati</taxon>
        <taxon>Pseudomonadota</taxon>
        <taxon>Gammaproteobacteria</taxon>
        <taxon>Lysobacterales</taxon>
        <taxon>Lysobacteraceae</taxon>
        <taxon>Xylella</taxon>
    </lineage>
</organism>
<comment type="function">
    <text evidence="1">Bidirectionally degrades single-stranded DNA into large acid-insoluble oligonucleotides, which are then degraded further into small acid-soluble oligonucleotides.</text>
</comment>
<comment type="catalytic activity">
    <reaction evidence="1">
        <text>Exonucleolytic cleavage in either 5'- to 3'- or 3'- to 5'-direction to yield nucleoside 5'-phosphates.</text>
        <dbReference type="EC" id="3.1.11.6"/>
    </reaction>
</comment>
<comment type="subunit">
    <text evidence="1">Heterooligomer composed of large and small subunits.</text>
</comment>
<comment type="subcellular location">
    <subcellularLocation>
        <location evidence="1">Cytoplasm</location>
    </subcellularLocation>
</comment>
<comment type="similarity">
    <text evidence="1">Belongs to the XseA family.</text>
</comment>
<feature type="chain" id="PRO_0000197905" description="Exodeoxyribonuclease 7 large subunit">
    <location>
        <begin position="1"/>
        <end position="444"/>
    </location>
</feature>
<evidence type="ECO:0000255" key="1">
    <source>
        <dbReference type="HAMAP-Rule" id="MF_00378"/>
    </source>
</evidence>
<name>EX7L_XYLFA</name>
<reference key="1">
    <citation type="journal article" date="2000" name="Nature">
        <title>The genome sequence of the plant pathogen Xylella fastidiosa.</title>
        <authorList>
            <person name="Simpson A.J.G."/>
            <person name="Reinach F.C."/>
            <person name="Arruda P."/>
            <person name="Abreu F.A."/>
            <person name="Acencio M."/>
            <person name="Alvarenga R."/>
            <person name="Alves L.M.C."/>
            <person name="Araya J.E."/>
            <person name="Baia G.S."/>
            <person name="Baptista C.S."/>
            <person name="Barros M.H."/>
            <person name="Bonaccorsi E.D."/>
            <person name="Bordin S."/>
            <person name="Bove J.M."/>
            <person name="Briones M.R.S."/>
            <person name="Bueno M.R.P."/>
            <person name="Camargo A.A."/>
            <person name="Camargo L.E.A."/>
            <person name="Carraro D.M."/>
            <person name="Carrer H."/>
            <person name="Colauto N.B."/>
            <person name="Colombo C."/>
            <person name="Costa F.F."/>
            <person name="Costa M.C.R."/>
            <person name="Costa-Neto C.M."/>
            <person name="Coutinho L.L."/>
            <person name="Cristofani M."/>
            <person name="Dias-Neto E."/>
            <person name="Docena C."/>
            <person name="El-Dorry H."/>
            <person name="Facincani A.P."/>
            <person name="Ferreira A.J.S."/>
            <person name="Ferreira V.C.A."/>
            <person name="Ferro J.A."/>
            <person name="Fraga J.S."/>
            <person name="Franca S.C."/>
            <person name="Franco M.C."/>
            <person name="Frohme M."/>
            <person name="Furlan L.R."/>
            <person name="Garnier M."/>
            <person name="Goldman G.H."/>
            <person name="Goldman M.H.S."/>
            <person name="Gomes S.L."/>
            <person name="Gruber A."/>
            <person name="Ho P.L."/>
            <person name="Hoheisel J.D."/>
            <person name="Junqueira M.L."/>
            <person name="Kemper E.L."/>
            <person name="Kitajima J.P."/>
            <person name="Krieger J.E."/>
            <person name="Kuramae E.E."/>
            <person name="Laigret F."/>
            <person name="Lambais M.R."/>
            <person name="Leite L.C.C."/>
            <person name="Lemos E.G.M."/>
            <person name="Lemos M.V.F."/>
            <person name="Lopes S.A."/>
            <person name="Lopes C.R."/>
            <person name="Machado J.A."/>
            <person name="Machado M.A."/>
            <person name="Madeira A.M.B.N."/>
            <person name="Madeira H.M.F."/>
            <person name="Marino C.L."/>
            <person name="Marques M.V."/>
            <person name="Martins E.A.L."/>
            <person name="Martins E.M.F."/>
            <person name="Matsukuma A.Y."/>
            <person name="Menck C.F.M."/>
            <person name="Miracca E.C."/>
            <person name="Miyaki C.Y."/>
            <person name="Monteiro-Vitorello C.B."/>
            <person name="Moon D.H."/>
            <person name="Nagai M.A."/>
            <person name="Nascimento A.L.T.O."/>
            <person name="Netto L.E.S."/>
            <person name="Nhani A. Jr."/>
            <person name="Nobrega F.G."/>
            <person name="Nunes L.R."/>
            <person name="Oliveira M.A."/>
            <person name="de Oliveira M.C."/>
            <person name="de Oliveira R.C."/>
            <person name="Palmieri D.A."/>
            <person name="Paris A."/>
            <person name="Peixoto B.R."/>
            <person name="Pereira G.A.G."/>
            <person name="Pereira H.A. Jr."/>
            <person name="Pesquero J.B."/>
            <person name="Quaggio R.B."/>
            <person name="Roberto P.G."/>
            <person name="Rodrigues V."/>
            <person name="de Rosa A.J.M."/>
            <person name="de Rosa V.E. Jr."/>
            <person name="de Sa R.G."/>
            <person name="Santelli R.V."/>
            <person name="Sawasaki H.E."/>
            <person name="da Silva A.C.R."/>
            <person name="da Silva A.M."/>
            <person name="da Silva F.R."/>
            <person name="Silva W.A. Jr."/>
            <person name="da Silveira J.F."/>
            <person name="Silvestri M.L.Z."/>
            <person name="Siqueira W.J."/>
            <person name="de Souza A.A."/>
            <person name="de Souza A.P."/>
            <person name="Terenzi M.F."/>
            <person name="Truffi D."/>
            <person name="Tsai S.M."/>
            <person name="Tsuhako M.H."/>
            <person name="Vallada H."/>
            <person name="Van Sluys M.A."/>
            <person name="Verjovski-Almeida S."/>
            <person name="Vettore A.L."/>
            <person name="Zago M.A."/>
            <person name="Zatz M."/>
            <person name="Meidanis J."/>
            <person name="Setubal J.C."/>
        </authorList>
    </citation>
    <scope>NUCLEOTIDE SEQUENCE [LARGE SCALE GENOMIC DNA]</scope>
    <source>
        <strain>9a5c</strain>
    </source>
</reference>
<accession>Q9PFC3</accession>
<protein>
    <recommendedName>
        <fullName evidence="1">Exodeoxyribonuclease 7 large subunit</fullName>
        <ecNumber evidence="1">3.1.11.6</ecNumber>
    </recommendedName>
    <alternativeName>
        <fullName evidence="1">Exodeoxyribonuclease VII large subunit</fullName>
        <shortName evidence="1">Exonuclease VII large subunit</shortName>
    </alternativeName>
</protein>
<sequence length="444" mass="49913">MQHRDEILTPSQLNTLARDLLESAFPLVWIEGELGNVSRPSSGHLYVTLKDAQAQVRCAMFKPKSQWLTFQPREGLRVLARGRLTLYEARGDYQIVLDHLEEAGEGALRRAFEQLRIRLEAEGLFDPARKQPLPVHPRRIAVITSPSGAVIRDIFSVLMRRFPLVEIELLPSLVQGDTAAAQITHLLRCADSSGRYDAILIARGGGSLEDLWAFNNEQLARTIAAAHTPVISAIGHETDFTLADFAADIRAPTPSVAAELLVPDQRALRQHLGQLQQRLLHLQQHRLDQAIQRADQLGLRLQARNPEMHLRLLAQRQAEAGRRLEQCLHHVLDRAQGQLRNHHTRLYALNPRQQIAGLQQHLKHLNPQQPLQRRLQQEQLRLHGLVRALEAVNPLATVARGYALVHRADNNTLVRDSAQVCVGDVLDTKLAHGQLRVRVEVSST</sequence>
<gene>
    <name evidence="1" type="primary">xseA</name>
    <name type="ordered locus">XF_0755</name>
</gene>
<keyword id="KW-0963">Cytoplasm</keyword>
<keyword id="KW-0269">Exonuclease</keyword>
<keyword id="KW-0378">Hydrolase</keyword>
<keyword id="KW-0540">Nuclease</keyword>
<proteinExistence type="inferred from homology"/>